<name>RL2_SHELP</name>
<keyword id="KW-1185">Reference proteome</keyword>
<keyword id="KW-0687">Ribonucleoprotein</keyword>
<keyword id="KW-0689">Ribosomal protein</keyword>
<keyword id="KW-0694">RNA-binding</keyword>
<keyword id="KW-0699">rRNA-binding</keyword>
<proteinExistence type="inferred from homology"/>
<organism>
    <name type="scientific">Shewanella loihica (strain ATCC BAA-1088 / PV-4)</name>
    <dbReference type="NCBI Taxonomy" id="323850"/>
    <lineage>
        <taxon>Bacteria</taxon>
        <taxon>Pseudomonadati</taxon>
        <taxon>Pseudomonadota</taxon>
        <taxon>Gammaproteobacteria</taxon>
        <taxon>Alteromonadales</taxon>
        <taxon>Shewanellaceae</taxon>
        <taxon>Shewanella</taxon>
    </lineage>
</organism>
<protein>
    <recommendedName>
        <fullName evidence="1">Large ribosomal subunit protein uL2</fullName>
    </recommendedName>
    <alternativeName>
        <fullName evidence="3">50S ribosomal protein L2</fullName>
    </alternativeName>
</protein>
<feature type="chain" id="PRO_0000310011" description="Large ribosomal subunit protein uL2">
    <location>
        <begin position="1"/>
        <end position="275"/>
    </location>
</feature>
<feature type="region of interest" description="Disordered" evidence="2">
    <location>
        <begin position="223"/>
        <end position="275"/>
    </location>
</feature>
<comment type="function">
    <text evidence="1">One of the primary rRNA binding proteins. Required for association of the 30S and 50S subunits to form the 70S ribosome, for tRNA binding and peptide bond formation. It has been suggested to have peptidyltransferase activity; this is somewhat controversial. Makes several contacts with the 16S rRNA in the 70S ribosome.</text>
</comment>
<comment type="subunit">
    <text evidence="1">Part of the 50S ribosomal subunit. Forms a bridge to the 30S subunit in the 70S ribosome.</text>
</comment>
<comment type="similarity">
    <text evidence="1">Belongs to the universal ribosomal protein uL2 family.</text>
</comment>
<accession>A3Q985</accession>
<gene>
    <name evidence="1" type="primary">rplB</name>
    <name type="ordered locus">Shew_0161</name>
</gene>
<evidence type="ECO:0000255" key="1">
    <source>
        <dbReference type="HAMAP-Rule" id="MF_01320"/>
    </source>
</evidence>
<evidence type="ECO:0000256" key="2">
    <source>
        <dbReference type="SAM" id="MobiDB-lite"/>
    </source>
</evidence>
<evidence type="ECO:0000305" key="3"/>
<dbReference type="EMBL" id="CP000606">
    <property type="protein sequence ID" value="ABO22033.1"/>
    <property type="molecule type" value="Genomic_DNA"/>
</dbReference>
<dbReference type="RefSeq" id="WP_011863969.1">
    <property type="nucleotide sequence ID" value="NC_009092.1"/>
</dbReference>
<dbReference type="SMR" id="A3Q985"/>
<dbReference type="STRING" id="323850.Shew_0161"/>
<dbReference type="KEGG" id="slo:Shew_0161"/>
<dbReference type="eggNOG" id="COG0090">
    <property type="taxonomic scope" value="Bacteria"/>
</dbReference>
<dbReference type="HOGENOM" id="CLU_036235_2_1_6"/>
<dbReference type="OrthoDB" id="9778722at2"/>
<dbReference type="Proteomes" id="UP000001558">
    <property type="component" value="Chromosome"/>
</dbReference>
<dbReference type="GO" id="GO:0015934">
    <property type="term" value="C:large ribosomal subunit"/>
    <property type="evidence" value="ECO:0007669"/>
    <property type="project" value="InterPro"/>
</dbReference>
<dbReference type="GO" id="GO:0019843">
    <property type="term" value="F:rRNA binding"/>
    <property type="evidence" value="ECO:0007669"/>
    <property type="project" value="UniProtKB-UniRule"/>
</dbReference>
<dbReference type="GO" id="GO:0003735">
    <property type="term" value="F:structural constituent of ribosome"/>
    <property type="evidence" value="ECO:0007669"/>
    <property type="project" value="InterPro"/>
</dbReference>
<dbReference type="GO" id="GO:0016740">
    <property type="term" value="F:transferase activity"/>
    <property type="evidence" value="ECO:0007669"/>
    <property type="project" value="InterPro"/>
</dbReference>
<dbReference type="GO" id="GO:0002181">
    <property type="term" value="P:cytoplasmic translation"/>
    <property type="evidence" value="ECO:0007669"/>
    <property type="project" value="TreeGrafter"/>
</dbReference>
<dbReference type="FunFam" id="2.30.30.30:FF:000001">
    <property type="entry name" value="50S ribosomal protein L2"/>
    <property type="match status" value="1"/>
</dbReference>
<dbReference type="FunFam" id="2.40.50.140:FF:000003">
    <property type="entry name" value="50S ribosomal protein L2"/>
    <property type="match status" value="1"/>
</dbReference>
<dbReference type="FunFam" id="4.10.950.10:FF:000001">
    <property type="entry name" value="50S ribosomal protein L2"/>
    <property type="match status" value="1"/>
</dbReference>
<dbReference type="Gene3D" id="2.30.30.30">
    <property type="match status" value="1"/>
</dbReference>
<dbReference type="Gene3D" id="2.40.50.140">
    <property type="entry name" value="Nucleic acid-binding proteins"/>
    <property type="match status" value="1"/>
</dbReference>
<dbReference type="Gene3D" id="4.10.950.10">
    <property type="entry name" value="Ribosomal protein L2, domain 3"/>
    <property type="match status" value="1"/>
</dbReference>
<dbReference type="HAMAP" id="MF_01320_B">
    <property type="entry name" value="Ribosomal_uL2_B"/>
    <property type="match status" value="1"/>
</dbReference>
<dbReference type="InterPro" id="IPR012340">
    <property type="entry name" value="NA-bd_OB-fold"/>
</dbReference>
<dbReference type="InterPro" id="IPR014722">
    <property type="entry name" value="Rib_uL2_dom2"/>
</dbReference>
<dbReference type="InterPro" id="IPR002171">
    <property type="entry name" value="Ribosomal_uL2"/>
</dbReference>
<dbReference type="InterPro" id="IPR005880">
    <property type="entry name" value="Ribosomal_uL2_bac/org-type"/>
</dbReference>
<dbReference type="InterPro" id="IPR022669">
    <property type="entry name" value="Ribosomal_uL2_C"/>
</dbReference>
<dbReference type="InterPro" id="IPR022671">
    <property type="entry name" value="Ribosomal_uL2_CS"/>
</dbReference>
<dbReference type="InterPro" id="IPR014726">
    <property type="entry name" value="Ribosomal_uL2_dom3"/>
</dbReference>
<dbReference type="InterPro" id="IPR022666">
    <property type="entry name" value="Ribosomal_uL2_RNA-bd_dom"/>
</dbReference>
<dbReference type="InterPro" id="IPR008991">
    <property type="entry name" value="Translation_prot_SH3-like_sf"/>
</dbReference>
<dbReference type="NCBIfam" id="TIGR01171">
    <property type="entry name" value="rplB_bact"/>
    <property type="match status" value="1"/>
</dbReference>
<dbReference type="PANTHER" id="PTHR13691:SF5">
    <property type="entry name" value="LARGE RIBOSOMAL SUBUNIT PROTEIN UL2M"/>
    <property type="match status" value="1"/>
</dbReference>
<dbReference type="PANTHER" id="PTHR13691">
    <property type="entry name" value="RIBOSOMAL PROTEIN L2"/>
    <property type="match status" value="1"/>
</dbReference>
<dbReference type="Pfam" id="PF00181">
    <property type="entry name" value="Ribosomal_L2"/>
    <property type="match status" value="1"/>
</dbReference>
<dbReference type="Pfam" id="PF03947">
    <property type="entry name" value="Ribosomal_L2_C"/>
    <property type="match status" value="1"/>
</dbReference>
<dbReference type="PIRSF" id="PIRSF002158">
    <property type="entry name" value="Ribosomal_L2"/>
    <property type="match status" value="1"/>
</dbReference>
<dbReference type="SMART" id="SM01383">
    <property type="entry name" value="Ribosomal_L2"/>
    <property type="match status" value="1"/>
</dbReference>
<dbReference type="SMART" id="SM01382">
    <property type="entry name" value="Ribosomal_L2_C"/>
    <property type="match status" value="1"/>
</dbReference>
<dbReference type="SUPFAM" id="SSF50249">
    <property type="entry name" value="Nucleic acid-binding proteins"/>
    <property type="match status" value="1"/>
</dbReference>
<dbReference type="SUPFAM" id="SSF50104">
    <property type="entry name" value="Translation proteins SH3-like domain"/>
    <property type="match status" value="1"/>
</dbReference>
<dbReference type="PROSITE" id="PS00467">
    <property type="entry name" value="RIBOSOMAL_L2"/>
    <property type="match status" value="1"/>
</dbReference>
<reference key="1">
    <citation type="submission" date="2007-03" db="EMBL/GenBank/DDBJ databases">
        <title>Complete sequence of Shewanella loihica PV-4.</title>
        <authorList>
            <consortium name="US DOE Joint Genome Institute"/>
            <person name="Copeland A."/>
            <person name="Lucas S."/>
            <person name="Lapidus A."/>
            <person name="Barry K."/>
            <person name="Detter J.C."/>
            <person name="Glavina del Rio T."/>
            <person name="Hammon N."/>
            <person name="Israni S."/>
            <person name="Dalin E."/>
            <person name="Tice H."/>
            <person name="Pitluck S."/>
            <person name="Chain P."/>
            <person name="Malfatti S."/>
            <person name="Shin M."/>
            <person name="Vergez L."/>
            <person name="Schmutz J."/>
            <person name="Larimer F."/>
            <person name="Land M."/>
            <person name="Hauser L."/>
            <person name="Kyrpides N."/>
            <person name="Mikhailova N."/>
            <person name="Romine M.F."/>
            <person name="Serres G."/>
            <person name="Fredrickson J."/>
            <person name="Tiedje J."/>
            <person name="Richardson P."/>
        </authorList>
    </citation>
    <scope>NUCLEOTIDE SEQUENCE [LARGE SCALE GENOMIC DNA]</scope>
    <source>
        <strain>ATCC BAA-1088 / PV-4</strain>
    </source>
</reference>
<sequence>MAVIKCKPTSAGRRHVVKVVNSDLHKGKPFAGLLAKKAKSGGRNNTGRITVRHVGGGHKQHYRIVDFKRNKDGIPAKVERLEYDPNRTANIALVLYADGERRYILAAKGMQAGDQIQSGIDAEIKAGNALPLRNIPVGSVVHAVEMKPGKGAQIARSAGTYVQVVARDGAYATLRLRSGEMRKVPVDCRATLGEVGNAEHMLRQLGKAGAKRWRGVRPTVRGVAMNPVDHPHGGGEGRTSGGRHPVTPWGVPTKGYKTRSNKRTDKYIVRRRNKK</sequence>